<reference key="1">
    <citation type="journal article" date="2006" name="Proc. Natl. Acad. Sci. U.S.A.">
        <title>The complete genome sequence of a chronic atrophic gastritis Helicobacter pylori strain: evolution during disease progression.</title>
        <authorList>
            <person name="Oh J.D."/>
            <person name="Kling-Baeckhed H."/>
            <person name="Giannakis M."/>
            <person name="Xu J."/>
            <person name="Fulton R.S."/>
            <person name="Fulton L.A."/>
            <person name="Cordum H.S."/>
            <person name="Wang C."/>
            <person name="Elliott G."/>
            <person name="Edwards J."/>
            <person name="Mardis E.R."/>
            <person name="Engstrand L.G."/>
            <person name="Gordon J.I."/>
        </authorList>
    </citation>
    <scope>NUCLEOTIDE SEQUENCE [LARGE SCALE GENOMIC DNA]</scope>
    <source>
        <strain>HPAG1</strain>
    </source>
</reference>
<accession>Q1CUU1</accession>
<protein>
    <recommendedName>
        <fullName evidence="1">tRNA uridine 5-carboxymethylaminomethyl modification enzyme MnmG</fullName>
    </recommendedName>
    <alternativeName>
        <fullName evidence="1">Glucose-inhibited division protein A</fullName>
    </alternativeName>
</protein>
<gene>
    <name evidence="1" type="primary">mnmG</name>
    <name evidence="1" type="synonym">gidA</name>
    <name type="ordered locus">HPAG1_0214</name>
</gene>
<sequence length="621" mass="69693">MVKESDILVVGGGHAGIEASLIAAKMGARVHLITMLIDTIGLASCNPAIGGLGKGHLTKEVDVLGGAMGIITDNSGLQYRVLNASKGPAVRGTRAQIDMDTYRIFARNLVLNTPNLSVSQEMTESLILENDEVVGVTTNINNTYRAKKVIITTGTFLKGVVHIGEHQNQNGRFGENASNSLALNLRELGFKVDRLKTGTCPRVAGNSIDFEGLEEHFGDTNPPYFSYKTKDFNPTQLSCFITYTNPITHQIIRDNFHRAPLFSGQIEGIGPRYCPSIEDKINRFSEKERHQLFLEPQTIHKSEYYINGLSTSLPLDVQEKVIHSIKGLENALITRYGYAIEYDFIQPTELTHTLETKKIKGLYLAGQINGTTGYEEAAAQGLMAGINAVLALKNQAPFILKRNEAYIGVLIDDLVTKGTNEPYRMFTSRAEYRLLLREDNTLFRLGEHAYRLGLMEQDFYKELKKDQQAIQENLKRLKEYVLTPSKEVLKRLNELDENPINDKVDGISLLARDSFNAEKMRSFFSFLAPLNERVLEQIKIECKYNIYIEKQHENIAKMDSMLKVSIPKDFVFKGIPGLSLEAVEKLEKFRPKSLFEASEISGITPANLDVLHLYIHLRKNS</sequence>
<comment type="function">
    <text evidence="1">NAD-binding protein involved in the addition of a carboxymethylaminomethyl (cmnm) group at the wobble position (U34) of certain tRNAs, forming tRNA-cmnm(5)s(2)U34.</text>
</comment>
<comment type="cofactor">
    <cofactor evidence="1">
        <name>FAD</name>
        <dbReference type="ChEBI" id="CHEBI:57692"/>
    </cofactor>
</comment>
<comment type="subunit">
    <text evidence="1">Homodimer. Heterotetramer of two MnmE and two MnmG subunits.</text>
</comment>
<comment type="subcellular location">
    <subcellularLocation>
        <location evidence="1">Cytoplasm</location>
    </subcellularLocation>
</comment>
<comment type="similarity">
    <text evidence="1">Belongs to the MnmG family.</text>
</comment>
<proteinExistence type="inferred from homology"/>
<name>MNMG_HELPH</name>
<evidence type="ECO:0000255" key="1">
    <source>
        <dbReference type="HAMAP-Rule" id="MF_00129"/>
    </source>
</evidence>
<dbReference type="EMBL" id="CP000241">
    <property type="protein sequence ID" value="ABF84281.1"/>
    <property type="molecule type" value="Genomic_DNA"/>
</dbReference>
<dbReference type="RefSeq" id="WP_000238118.1">
    <property type="nucleotide sequence ID" value="NC_008086.1"/>
</dbReference>
<dbReference type="SMR" id="Q1CUU1"/>
<dbReference type="KEGG" id="hpa:HPAG1_0214"/>
<dbReference type="HOGENOM" id="CLU_007831_2_2_7"/>
<dbReference type="GO" id="GO:0005829">
    <property type="term" value="C:cytosol"/>
    <property type="evidence" value="ECO:0007669"/>
    <property type="project" value="TreeGrafter"/>
</dbReference>
<dbReference type="GO" id="GO:0050660">
    <property type="term" value="F:flavin adenine dinucleotide binding"/>
    <property type="evidence" value="ECO:0007669"/>
    <property type="project" value="UniProtKB-UniRule"/>
</dbReference>
<dbReference type="GO" id="GO:0030488">
    <property type="term" value="P:tRNA methylation"/>
    <property type="evidence" value="ECO:0007669"/>
    <property type="project" value="TreeGrafter"/>
</dbReference>
<dbReference type="GO" id="GO:0002098">
    <property type="term" value="P:tRNA wobble uridine modification"/>
    <property type="evidence" value="ECO:0007669"/>
    <property type="project" value="InterPro"/>
</dbReference>
<dbReference type="FunFam" id="1.10.150.570:FF:000001">
    <property type="entry name" value="tRNA uridine 5-carboxymethylaminomethyl modification enzyme MnmG"/>
    <property type="match status" value="1"/>
</dbReference>
<dbReference type="FunFam" id="3.50.50.60:FF:000002">
    <property type="entry name" value="tRNA uridine 5-carboxymethylaminomethyl modification enzyme MnmG"/>
    <property type="match status" value="1"/>
</dbReference>
<dbReference type="Gene3D" id="3.50.50.60">
    <property type="entry name" value="FAD/NAD(P)-binding domain"/>
    <property type="match status" value="2"/>
</dbReference>
<dbReference type="Gene3D" id="1.10.150.570">
    <property type="entry name" value="GidA associated domain, C-terminal subdomain"/>
    <property type="match status" value="1"/>
</dbReference>
<dbReference type="Gene3D" id="1.10.10.1800">
    <property type="entry name" value="tRNA uridine 5-carboxymethylaminomethyl modification enzyme MnmG/GidA"/>
    <property type="match status" value="1"/>
</dbReference>
<dbReference type="HAMAP" id="MF_00129">
    <property type="entry name" value="MnmG_GidA"/>
    <property type="match status" value="1"/>
</dbReference>
<dbReference type="InterPro" id="IPR036188">
    <property type="entry name" value="FAD/NAD-bd_sf"/>
</dbReference>
<dbReference type="InterPro" id="IPR049312">
    <property type="entry name" value="GIDA_C_N"/>
</dbReference>
<dbReference type="InterPro" id="IPR004416">
    <property type="entry name" value="MnmG"/>
</dbReference>
<dbReference type="InterPro" id="IPR002218">
    <property type="entry name" value="MnmG-rel"/>
</dbReference>
<dbReference type="InterPro" id="IPR020595">
    <property type="entry name" value="MnmG-rel_CS"/>
</dbReference>
<dbReference type="InterPro" id="IPR026904">
    <property type="entry name" value="MnmG_C"/>
</dbReference>
<dbReference type="InterPro" id="IPR047001">
    <property type="entry name" value="MnmG_C_subdom"/>
</dbReference>
<dbReference type="InterPro" id="IPR044920">
    <property type="entry name" value="MnmG_C_subdom_sf"/>
</dbReference>
<dbReference type="InterPro" id="IPR040131">
    <property type="entry name" value="MnmG_N"/>
</dbReference>
<dbReference type="NCBIfam" id="TIGR00136">
    <property type="entry name" value="mnmG_gidA"/>
    <property type="match status" value="1"/>
</dbReference>
<dbReference type="PANTHER" id="PTHR11806">
    <property type="entry name" value="GLUCOSE INHIBITED DIVISION PROTEIN A"/>
    <property type="match status" value="1"/>
</dbReference>
<dbReference type="PANTHER" id="PTHR11806:SF0">
    <property type="entry name" value="PROTEIN MTO1 HOMOLOG, MITOCHONDRIAL"/>
    <property type="match status" value="1"/>
</dbReference>
<dbReference type="Pfam" id="PF01134">
    <property type="entry name" value="GIDA"/>
    <property type="match status" value="1"/>
</dbReference>
<dbReference type="Pfam" id="PF21680">
    <property type="entry name" value="GIDA_C_1st"/>
    <property type="match status" value="1"/>
</dbReference>
<dbReference type="Pfam" id="PF13932">
    <property type="entry name" value="SAM_GIDA_C"/>
    <property type="match status" value="1"/>
</dbReference>
<dbReference type="PRINTS" id="PR00411">
    <property type="entry name" value="PNDRDTASEI"/>
</dbReference>
<dbReference type="SMART" id="SM01228">
    <property type="entry name" value="GIDA_assoc_3"/>
    <property type="match status" value="1"/>
</dbReference>
<dbReference type="SUPFAM" id="SSF51905">
    <property type="entry name" value="FAD/NAD(P)-binding domain"/>
    <property type="match status" value="1"/>
</dbReference>
<dbReference type="PROSITE" id="PS01280">
    <property type="entry name" value="GIDA_1"/>
    <property type="match status" value="1"/>
</dbReference>
<dbReference type="PROSITE" id="PS01281">
    <property type="entry name" value="GIDA_2"/>
    <property type="match status" value="1"/>
</dbReference>
<organism>
    <name type="scientific">Helicobacter pylori (strain HPAG1)</name>
    <dbReference type="NCBI Taxonomy" id="357544"/>
    <lineage>
        <taxon>Bacteria</taxon>
        <taxon>Pseudomonadati</taxon>
        <taxon>Campylobacterota</taxon>
        <taxon>Epsilonproteobacteria</taxon>
        <taxon>Campylobacterales</taxon>
        <taxon>Helicobacteraceae</taxon>
        <taxon>Helicobacter</taxon>
    </lineage>
</organism>
<feature type="chain" id="PRO_1000016610" description="tRNA uridine 5-carboxymethylaminomethyl modification enzyme MnmG">
    <location>
        <begin position="1"/>
        <end position="621"/>
    </location>
</feature>
<feature type="binding site" evidence="1">
    <location>
        <begin position="11"/>
        <end position="16"/>
    </location>
    <ligand>
        <name>FAD</name>
        <dbReference type="ChEBI" id="CHEBI:57692"/>
    </ligand>
</feature>
<feature type="binding site" evidence="1">
    <location>
        <begin position="270"/>
        <end position="284"/>
    </location>
    <ligand>
        <name>NAD(+)</name>
        <dbReference type="ChEBI" id="CHEBI:57540"/>
    </ligand>
</feature>
<keyword id="KW-0963">Cytoplasm</keyword>
<keyword id="KW-0274">FAD</keyword>
<keyword id="KW-0285">Flavoprotein</keyword>
<keyword id="KW-0520">NAD</keyword>
<keyword id="KW-0819">tRNA processing</keyword>